<protein>
    <recommendedName>
        <fullName evidence="1">Orotate phosphoribosyltransferase</fullName>
        <shortName evidence="1">OPRT</shortName>
        <shortName evidence="1">OPRTase</shortName>
        <ecNumber evidence="1">2.4.2.10</ecNumber>
    </recommendedName>
</protein>
<comment type="function">
    <text evidence="1">Catalyzes the transfer of a ribosyl phosphate group from 5-phosphoribose 1-diphosphate to orotate, leading to the formation of orotidine monophosphate (OMP).</text>
</comment>
<comment type="catalytic activity">
    <reaction evidence="1">
        <text>orotidine 5'-phosphate + diphosphate = orotate + 5-phospho-alpha-D-ribose 1-diphosphate</text>
        <dbReference type="Rhea" id="RHEA:10380"/>
        <dbReference type="ChEBI" id="CHEBI:30839"/>
        <dbReference type="ChEBI" id="CHEBI:33019"/>
        <dbReference type="ChEBI" id="CHEBI:57538"/>
        <dbReference type="ChEBI" id="CHEBI:58017"/>
        <dbReference type="EC" id="2.4.2.10"/>
    </reaction>
</comment>
<comment type="cofactor">
    <cofactor evidence="1">
        <name>Mg(2+)</name>
        <dbReference type="ChEBI" id="CHEBI:18420"/>
    </cofactor>
</comment>
<comment type="pathway">
    <text evidence="1">Pyrimidine metabolism; UMP biosynthesis via de novo pathway; UMP from orotate: step 1/2.</text>
</comment>
<comment type="subunit">
    <text evidence="1">Homodimer.</text>
</comment>
<comment type="similarity">
    <text evidence="1">Belongs to the purine/pyrimidine phosphoribosyltransferase family. PyrE subfamily.</text>
</comment>
<reference key="1">
    <citation type="journal article" date="2009" name="Stand. Genomic Sci.">
        <title>Complete genome sequence of Methanoculleus marisnigri Romesser et al. 1981 type strain JR1.</title>
        <authorList>
            <person name="Anderson I.J."/>
            <person name="Sieprawska-Lupa M."/>
            <person name="Lapidus A."/>
            <person name="Nolan M."/>
            <person name="Copeland A."/>
            <person name="Glavina Del Rio T."/>
            <person name="Tice H."/>
            <person name="Dalin E."/>
            <person name="Barry K."/>
            <person name="Saunders E."/>
            <person name="Han C."/>
            <person name="Brettin T."/>
            <person name="Detter J.C."/>
            <person name="Bruce D."/>
            <person name="Mikhailova N."/>
            <person name="Pitluck S."/>
            <person name="Hauser L."/>
            <person name="Land M."/>
            <person name="Lucas S."/>
            <person name="Richardson P."/>
            <person name="Whitman W.B."/>
            <person name="Kyrpides N.C."/>
        </authorList>
    </citation>
    <scope>NUCLEOTIDE SEQUENCE [LARGE SCALE GENOMIC DNA]</scope>
    <source>
        <strain>ATCC 35101 / DSM 1498 / JR1</strain>
    </source>
</reference>
<name>PYRE_METMJ</name>
<organism>
    <name type="scientific">Methanoculleus marisnigri (strain ATCC 35101 / DSM 1498 / JR1)</name>
    <dbReference type="NCBI Taxonomy" id="368407"/>
    <lineage>
        <taxon>Archaea</taxon>
        <taxon>Methanobacteriati</taxon>
        <taxon>Methanobacteriota</taxon>
        <taxon>Stenosarchaea group</taxon>
        <taxon>Methanomicrobia</taxon>
        <taxon>Methanomicrobiales</taxon>
        <taxon>Methanomicrobiaceae</taxon>
        <taxon>Methanoculleus</taxon>
    </lineage>
</organism>
<gene>
    <name evidence="1" type="primary">pyrE</name>
    <name type="ordered locus">Memar_1001</name>
</gene>
<proteinExistence type="inferred from homology"/>
<feature type="chain" id="PRO_0000298885" description="Orotate phosphoribosyltransferase">
    <location>
        <begin position="1"/>
        <end position="170"/>
    </location>
</feature>
<feature type="binding site" evidence="1">
    <location>
        <position position="86"/>
    </location>
    <ligand>
        <name>5-phospho-alpha-D-ribose 1-diphosphate</name>
        <dbReference type="ChEBI" id="CHEBI:58017"/>
        <note>ligand shared between dimeric partners</note>
    </ligand>
</feature>
<feature type="binding site" description="in other chain" evidence="1">
    <location>
        <position position="87"/>
    </location>
    <ligand>
        <name>5-phospho-alpha-D-ribose 1-diphosphate</name>
        <dbReference type="ChEBI" id="CHEBI:58017"/>
        <note>ligand shared between dimeric partners</note>
    </ligand>
</feature>
<feature type="binding site" evidence="1">
    <location>
        <position position="90"/>
    </location>
    <ligand>
        <name>5-phospho-alpha-D-ribose 1-diphosphate</name>
        <dbReference type="ChEBI" id="CHEBI:58017"/>
        <note>ligand shared between dimeric partners</note>
    </ligand>
</feature>
<feature type="binding site" evidence="1">
    <location>
        <position position="92"/>
    </location>
    <ligand>
        <name>5-phospho-alpha-D-ribose 1-diphosphate</name>
        <dbReference type="ChEBI" id="CHEBI:58017"/>
        <note>ligand shared between dimeric partners</note>
    </ligand>
</feature>
<feature type="binding site" description="in other chain" evidence="1">
    <location>
        <begin position="111"/>
        <end position="119"/>
    </location>
    <ligand>
        <name>5-phospho-alpha-D-ribose 1-diphosphate</name>
        <dbReference type="ChEBI" id="CHEBI:58017"/>
        <note>ligand shared between dimeric partners</note>
    </ligand>
</feature>
<feature type="binding site" evidence="1">
    <location>
        <position position="115"/>
    </location>
    <ligand>
        <name>orotate</name>
        <dbReference type="ChEBI" id="CHEBI:30839"/>
    </ligand>
</feature>
<feature type="binding site" evidence="1">
    <location>
        <position position="143"/>
    </location>
    <ligand>
        <name>orotate</name>
        <dbReference type="ChEBI" id="CHEBI:30839"/>
    </ligand>
</feature>
<sequence>MVNPIATLLLECGAIEFGEFVLASGARSSYYIDIKAATTNPAVLTEIGKTIAEGREFEMVAGVAVGAVPIAVAVSLASGRPYAVVRKEGKDHGKAGTIIGDVLGKNVLLVEDVTTSGGSALYGLEALRAAGAHVDQVVTVVDREAGAREALAEKGASLLALVRVSELLDG</sequence>
<keyword id="KW-0328">Glycosyltransferase</keyword>
<keyword id="KW-0460">Magnesium</keyword>
<keyword id="KW-0665">Pyrimidine biosynthesis</keyword>
<keyword id="KW-0808">Transferase</keyword>
<evidence type="ECO:0000255" key="1">
    <source>
        <dbReference type="HAMAP-Rule" id="MF_01208"/>
    </source>
</evidence>
<dbReference type="EC" id="2.4.2.10" evidence="1"/>
<dbReference type="EMBL" id="CP000562">
    <property type="protein sequence ID" value="ABN56934.1"/>
    <property type="molecule type" value="Genomic_DNA"/>
</dbReference>
<dbReference type="RefSeq" id="WP_011843845.1">
    <property type="nucleotide sequence ID" value="NC_009051.1"/>
</dbReference>
<dbReference type="SMR" id="A3CU84"/>
<dbReference type="STRING" id="368407.Memar_1001"/>
<dbReference type="GeneID" id="4847962"/>
<dbReference type="GeneID" id="76731572"/>
<dbReference type="KEGG" id="mem:Memar_1001"/>
<dbReference type="eggNOG" id="arCOG00029">
    <property type="taxonomic scope" value="Archaea"/>
</dbReference>
<dbReference type="HOGENOM" id="CLU_074878_2_0_2"/>
<dbReference type="OrthoDB" id="9089at2157"/>
<dbReference type="UniPathway" id="UPA00070">
    <property type="reaction ID" value="UER00119"/>
</dbReference>
<dbReference type="Proteomes" id="UP000002146">
    <property type="component" value="Chromosome"/>
</dbReference>
<dbReference type="GO" id="GO:0000287">
    <property type="term" value="F:magnesium ion binding"/>
    <property type="evidence" value="ECO:0007669"/>
    <property type="project" value="UniProtKB-UniRule"/>
</dbReference>
<dbReference type="GO" id="GO:0004588">
    <property type="term" value="F:orotate phosphoribosyltransferase activity"/>
    <property type="evidence" value="ECO:0007669"/>
    <property type="project" value="UniProtKB-UniRule"/>
</dbReference>
<dbReference type="GO" id="GO:0044205">
    <property type="term" value="P:'de novo' UMP biosynthetic process"/>
    <property type="evidence" value="ECO:0007669"/>
    <property type="project" value="UniProtKB-UniRule"/>
</dbReference>
<dbReference type="GO" id="GO:0019856">
    <property type="term" value="P:pyrimidine nucleobase biosynthetic process"/>
    <property type="evidence" value="ECO:0007669"/>
    <property type="project" value="TreeGrafter"/>
</dbReference>
<dbReference type="CDD" id="cd06223">
    <property type="entry name" value="PRTases_typeI"/>
    <property type="match status" value="1"/>
</dbReference>
<dbReference type="Gene3D" id="3.40.50.2020">
    <property type="match status" value="1"/>
</dbReference>
<dbReference type="HAMAP" id="MF_01208">
    <property type="entry name" value="PyrE"/>
    <property type="match status" value="1"/>
</dbReference>
<dbReference type="InterPro" id="IPR023031">
    <property type="entry name" value="OPRT"/>
</dbReference>
<dbReference type="InterPro" id="IPR004467">
    <property type="entry name" value="Or_phspho_trans_dom"/>
</dbReference>
<dbReference type="InterPro" id="IPR000836">
    <property type="entry name" value="PRibTrfase_dom"/>
</dbReference>
<dbReference type="InterPro" id="IPR029057">
    <property type="entry name" value="PRTase-like"/>
</dbReference>
<dbReference type="NCBIfam" id="TIGR00336">
    <property type="entry name" value="pyrE"/>
    <property type="match status" value="1"/>
</dbReference>
<dbReference type="PANTHER" id="PTHR19278">
    <property type="entry name" value="OROTATE PHOSPHORIBOSYLTRANSFERASE"/>
    <property type="match status" value="1"/>
</dbReference>
<dbReference type="PANTHER" id="PTHR19278:SF9">
    <property type="entry name" value="URIDINE 5'-MONOPHOSPHATE SYNTHASE"/>
    <property type="match status" value="1"/>
</dbReference>
<dbReference type="Pfam" id="PF00156">
    <property type="entry name" value="Pribosyltran"/>
    <property type="match status" value="1"/>
</dbReference>
<dbReference type="SUPFAM" id="SSF53271">
    <property type="entry name" value="PRTase-like"/>
    <property type="match status" value="1"/>
</dbReference>
<accession>A3CU84</accession>